<sequence>MSKLSRATRTLKKPEAGGVIRSIVRAGQAIPGPPLGPILGQRGVSINQFCKEFNEKTKDIKEGIPLPTKIFIKPDRTFELKIGQPTVSYFLKAAAGIEKGARHTGKEVAGLVSLKHVYEIACVKAKDDAFAMQDVPLSSVVRSIIGSARSLGIRVVKDLSAEELEAFQKERAVFLAAQKEADLAAQAEAAKK</sequence>
<keyword id="KW-0496">Mitochondrion</keyword>
<keyword id="KW-1185">Reference proteome</keyword>
<keyword id="KW-0687">Ribonucleoprotein</keyword>
<keyword id="KW-0689">Ribosomal protein</keyword>
<keyword id="KW-0809">Transit peptide</keyword>
<gene>
    <name type="primary">Mrpl11</name>
</gene>
<comment type="subunit">
    <text evidence="1">Component of the mitochondrial ribosome large subunit (39S) which comprises a 16S rRNA and about 50 distinct proteins.</text>
</comment>
<comment type="subcellular location">
    <subcellularLocation>
        <location evidence="3">Mitochondrion</location>
    </subcellularLocation>
</comment>
<comment type="similarity">
    <text evidence="4">Belongs to the universal ribosomal protein uL11 family.</text>
</comment>
<name>RM11_MOUSE</name>
<proteinExistence type="evidence at protein level"/>
<protein>
    <recommendedName>
        <fullName evidence="4">Large ribosomal subunit protein uL11m</fullName>
    </recommendedName>
    <alternativeName>
        <fullName>39S ribosomal protein L11, mitochondrial</fullName>
        <shortName>L11mt</shortName>
        <shortName>MRP-L11</shortName>
    </alternativeName>
</protein>
<evidence type="ECO:0000250" key="1">
    <source>
        <dbReference type="UniProtKB" id="Q9Y3B7"/>
    </source>
</evidence>
<evidence type="ECO:0000255" key="2"/>
<evidence type="ECO:0000269" key="3">
    <source>
    </source>
</evidence>
<evidence type="ECO:0000305" key="4"/>
<dbReference type="EMBL" id="AB049639">
    <property type="protein sequence ID" value="BAB40844.1"/>
    <property type="molecule type" value="mRNA"/>
</dbReference>
<dbReference type="EMBL" id="AK002797">
    <property type="protein sequence ID" value="BAB22366.1"/>
    <property type="molecule type" value="mRNA"/>
</dbReference>
<dbReference type="EMBL" id="AK010329">
    <property type="protein sequence ID" value="BAB26856.1"/>
    <property type="molecule type" value="mRNA"/>
</dbReference>
<dbReference type="EMBL" id="AK167247">
    <property type="protein sequence ID" value="BAE39368.1"/>
    <property type="molecule type" value="mRNA"/>
</dbReference>
<dbReference type="EMBL" id="BC046750">
    <property type="protein sequence ID" value="AAH46750.1"/>
    <property type="molecule type" value="mRNA"/>
</dbReference>
<dbReference type="CCDS" id="CCDS29444.1"/>
<dbReference type="RefSeq" id="NP_079829.1">
    <property type="nucleotide sequence ID" value="NM_025553.4"/>
</dbReference>
<dbReference type="SMR" id="Q9CQF0"/>
<dbReference type="BioGRID" id="211460">
    <property type="interactions" value="39"/>
</dbReference>
<dbReference type="ComplexPortal" id="CPX-5302">
    <property type="entry name" value="39S mitochondrial large ribosomal subunit"/>
</dbReference>
<dbReference type="FunCoup" id="Q9CQF0">
    <property type="interactions" value="2263"/>
</dbReference>
<dbReference type="STRING" id="10090.ENSMUSP00000025836"/>
<dbReference type="iPTMnet" id="Q9CQF0"/>
<dbReference type="PhosphoSitePlus" id="Q9CQF0"/>
<dbReference type="PaxDb" id="10090-ENSMUSP00000025836"/>
<dbReference type="PeptideAtlas" id="Q9CQF0"/>
<dbReference type="ProteomicsDB" id="300518"/>
<dbReference type="Pumba" id="Q9CQF0"/>
<dbReference type="Antibodypedia" id="30159">
    <property type="antibodies" value="310 antibodies from 30 providers"/>
</dbReference>
<dbReference type="DNASU" id="66419"/>
<dbReference type="Ensembl" id="ENSMUST00000025836.6">
    <property type="protein sequence ID" value="ENSMUSP00000025836.5"/>
    <property type="gene ID" value="ENSMUSG00000024902.6"/>
</dbReference>
<dbReference type="GeneID" id="66419"/>
<dbReference type="KEGG" id="mmu:66419"/>
<dbReference type="UCSC" id="uc008gbt.2">
    <property type="organism name" value="mouse"/>
</dbReference>
<dbReference type="AGR" id="MGI:2137215"/>
<dbReference type="CTD" id="65003"/>
<dbReference type="MGI" id="MGI:2137215">
    <property type="gene designation" value="Mrpl11"/>
</dbReference>
<dbReference type="VEuPathDB" id="HostDB:ENSMUSG00000024902"/>
<dbReference type="eggNOG" id="KOG3257">
    <property type="taxonomic scope" value="Eukaryota"/>
</dbReference>
<dbReference type="GeneTree" id="ENSGT00390000003153"/>
<dbReference type="HOGENOM" id="CLU_074237_1_1_1"/>
<dbReference type="InParanoid" id="Q9CQF0"/>
<dbReference type="OMA" id="CKQFNAK"/>
<dbReference type="OrthoDB" id="1091498at2759"/>
<dbReference type="PhylomeDB" id="Q9CQF0"/>
<dbReference type="TreeFam" id="TF313471"/>
<dbReference type="Reactome" id="R-MMU-5389840">
    <property type="pathway name" value="Mitochondrial translation elongation"/>
</dbReference>
<dbReference type="Reactome" id="R-MMU-5419276">
    <property type="pathway name" value="Mitochondrial translation termination"/>
</dbReference>
<dbReference type="BioGRID-ORCS" id="66419">
    <property type="hits" value="20 hits in 77 CRISPR screens"/>
</dbReference>
<dbReference type="ChiTaRS" id="Mrpl11">
    <property type="organism name" value="mouse"/>
</dbReference>
<dbReference type="PRO" id="PR:Q9CQF0"/>
<dbReference type="Proteomes" id="UP000000589">
    <property type="component" value="Chromosome 19"/>
</dbReference>
<dbReference type="RNAct" id="Q9CQF0">
    <property type="molecule type" value="protein"/>
</dbReference>
<dbReference type="Bgee" id="ENSMUSG00000024902">
    <property type="expression patterns" value="Expressed in optic fissure and 261 other cell types or tissues"/>
</dbReference>
<dbReference type="ExpressionAtlas" id="Q9CQF0">
    <property type="expression patterns" value="baseline and differential"/>
</dbReference>
<dbReference type="GO" id="GO:0005743">
    <property type="term" value="C:mitochondrial inner membrane"/>
    <property type="evidence" value="ECO:0000303"/>
    <property type="project" value="ComplexPortal"/>
</dbReference>
<dbReference type="GO" id="GO:0005762">
    <property type="term" value="C:mitochondrial large ribosomal subunit"/>
    <property type="evidence" value="ECO:0000250"/>
    <property type="project" value="UniProtKB"/>
</dbReference>
<dbReference type="GO" id="GO:0005739">
    <property type="term" value="C:mitochondrion"/>
    <property type="evidence" value="ECO:0007005"/>
    <property type="project" value="MGI"/>
</dbReference>
<dbReference type="GO" id="GO:0003735">
    <property type="term" value="F:structural constituent of ribosome"/>
    <property type="evidence" value="ECO:0000266"/>
    <property type="project" value="MGI"/>
</dbReference>
<dbReference type="GO" id="GO:0032543">
    <property type="term" value="P:mitochondrial translation"/>
    <property type="evidence" value="ECO:0000303"/>
    <property type="project" value="ComplexPortal"/>
</dbReference>
<dbReference type="GO" id="GO:0006412">
    <property type="term" value="P:translation"/>
    <property type="evidence" value="ECO:0000266"/>
    <property type="project" value="MGI"/>
</dbReference>
<dbReference type="CDD" id="cd00349">
    <property type="entry name" value="Ribosomal_L11"/>
    <property type="match status" value="1"/>
</dbReference>
<dbReference type="FunFam" id="1.10.10.250:FF:000004">
    <property type="entry name" value="39S ribosomal protein L11, mitochondrial"/>
    <property type="match status" value="1"/>
</dbReference>
<dbReference type="FunFam" id="3.30.1550.10:FF:000003">
    <property type="entry name" value="39S ribosomal protein L11, mitochondrial"/>
    <property type="match status" value="1"/>
</dbReference>
<dbReference type="Gene3D" id="1.10.10.250">
    <property type="entry name" value="Ribosomal protein L11, C-terminal domain"/>
    <property type="match status" value="1"/>
</dbReference>
<dbReference type="Gene3D" id="3.30.1550.10">
    <property type="entry name" value="Ribosomal protein L11/L12, N-terminal domain"/>
    <property type="match status" value="1"/>
</dbReference>
<dbReference type="HAMAP" id="MF_00736">
    <property type="entry name" value="Ribosomal_uL11"/>
    <property type="match status" value="1"/>
</dbReference>
<dbReference type="InterPro" id="IPR000911">
    <property type="entry name" value="Ribosomal_uL11"/>
</dbReference>
<dbReference type="InterPro" id="IPR006519">
    <property type="entry name" value="Ribosomal_uL11_bac-typ"/>
</dbReference>
<dbReference type="InterPro" id="IPR020783">
    <property type="entry name" value="Ribosomal_uL11_C"/>
</dbReference>
<dbReference type="InterPro" id="IPR036769">
    <property type="entry name" value="Ribosomal_uL11_C_sf"/>
</dbReference>
<dbReference type="InterPro" id="IPR020784">
    <property type="entry name" value="Ribosomal_uL11_N"/>
</dbReference>
<dbReference type="InterPro" id="IPR036796">
    <property type="entry name" value="Ribosomal_uL11_N_sf"/>
</dbReference>
<dbReference type="NCBIfam" id="TIGR01632">
    <property type="entry name" value="L11_bact"/>
    <property type="match status" value="1"/>
</dbReference>
<dbReference type="PANTHER" id="PTHR11661">
    <property type="entry name" value="60S RIBOSOMAL PROTEIN L12"/>
    <property type="match status" value="1"/>
</dbReference>
<dbReference type="PANTHER" id="PTHR11661:SF1">
    <property type="entry name" value="LARGE RIBOSOMAL SUBUNIT PROTEIN UL11M"/>
    <property type="match status" value="1"/>
</dbReference>
<dbReference type="Pfam" id="PF00298">
    <property type="entry name" value="Ribosomal_L11"/>
    <property type="match status" value="1"/>
</dbReference>
<dbReference type="Pfam" id="PF03946">
    <property type="entry name" value="Ribosomal_L11_N"/>
    <property type="match status" value="1"/>
</dbReference>
<dbReference type="SMART" id="SM00649">
    <property type="entry name" value="RL11"/>
    <property type="match status" value="1"/>
</dbReference>
<dbReference type="SUPFAM" id="SSF54747">
    <property type="entry name" value="Ribosomal L11/L12e N-terminal domain"/>
    <property type="match status" value="1"/>
</dbReference>
<dbReference type="SUPFAM" id="SSF46906">
    <property type="entry name" value="Ribosomal protein L11, C-terminal domain"/>
    <property type="match status" value="1"/>
</dbReference>
<reference key="1">
    <citation type="journal article" date="2001" name="J. Biol. Chem.">
        <title>Structural compensation for the deficit of rRNA with proteins in the mammalian mitochondrial ribosome. Systematic analysis of protein components of the large ribosomal subunit from mammalian mitochondria.</title>
        <authorList>
            <person name="Suzuki T."/>
            <person name="Terasaki M."/>
            <person name="Takemoto-Hori C."/>
            <person name="Hanada T."/>
            <person name="Ueda T."/>
            <person name="Wada A."/>
            <person name="Watanabe K."/>
        </authorList>
    </citation>
    <scope>NUCLEOTIDE SEQUENCE [MRNA]</scope>
    <scope>SUBCELLULAR LOCATION</scope>
</reference>
<reference key="2">
    <citation type="journal article" date="2005" name="Science">
        <title>The transcriptional landscape of the mammalian genome.</title>
        <authorList>
            <person name="Carninci P."/>
            <person name="Kasukawa T."/>
            <person name="Katayama S."/>
            <person name="Gough J."/>
            <person name="Frith M.C."/>
            <person name="Maeda N."/>
            <person name="Oyama R."/>
            <person name="Ravasi T."/>
            <person name="Lenhard B."/>
            <person name="Wells C."/>
            <person name="Kodzius R."/>
            <person name="Shimokawa K."/>
            <person name="Bajic V.B."/>
            <person name="Brenner S.E."/>
            <person name="Batalov S."/>
            <person name="Forrest A.R."/>
            <person name="Zavolan M."/>
            <person name="Davis M.J."/>
            <person name="Wilming L.G."/>
            <person name="Aidinis V."/>
            <person name="Allen J.E."/>
            <person name="Ambesi-Impiombato A."/>
            <person name="Apweiler R."/>
            <person name="Aturaliya R.N."/>
            <person name="Bailey T.L."/>
            <person name="Bansal M."/>
            <person name="Baxter L."/>
            <person name="Beisel K.W."/>
            <person name="Bersano T."/>
            <person name="Bono H."/>
            <person name="Chalk A.M."/>
            <person name="Chiu K.P."/>
            <person name="Choudhary V."/>
            <person name="Christoffels A."/>
            <person name="Clutterbuck D.R."/>
            <person name="Crowe M.L."/>
            <person name="Dalla E."/>
            <person name="Dalrymple B.P."/>
            <person name="de Bono B."/>
            <person name="Della Gatta G."/>
            <person name="di Bernardo D."/>
            <person name="Down T."/>
            <person name="Engstrom P."/>
            <person name="Fagiolini M."/>
            <person name="Faulkner G."/>
            <person name="Fletcher C.F."/>
            <person name="Fukushima T."/>
            <person name="Furuno M."/>
            <person name="Futaki S."/>
            <person name="Gariboldi M."/>
            <person name="Georgii-Hemming P."/>
            <person name="Gingeras T.R."/>
            <person name="Gojobori T."/>
            <person name="Green R.E."/>
            <person name="Gustincich S."/>
            <person name="Harbers M."/>
            <person name="Hayashi Y."/>
            <person name="Hensch T.K."/>
            <person name="Hirokawa N."/>
            <person name="Hill D."/>
            <person name="Huminiecki L."/>
            <person name="Iacono M."/>
            <person name="Ikeo K."/>
            <person name="Iwama A."/>
            <person name="Ishikawa T."/>
            <person name="Jakt M."/>
            <person name="Kanapin A."/>
            <person name="Katoh M."/>
            <person name="Kawasawa Y."/>
            <person name="Kelso J."/>
            <person name="Kitamura H."/>
            <person name="Kitano H."/>
            <person name="Kollias G."/>
            <person name="Krishnan S.P."/>
            <person name="Kruger A."/>
            <person name="Kummerfeld S.K."/>
            <person name="Kurochkin I.V."/>
            <person name="Lareau L.F."/>
            <person name="Lazarevic D."/>
            <person name="Lipovich L."/>
            <person name="Liu J."/>
            <person name="Liuni S."/>
            <person name="McWilliam S."/>
            <person name="Madan Babu M."/>
            <person name="Madera M."/>
            <person name="Marchionni L."/>
            <person name="Matsuda H."/>
            <person name="Matsuzawa S."/>
            <person name="Miki H."/>
            <person name="Mignone F."/>
            <person name="Miyake S."/>
            <person name="Morris K."/>
            <person name="Mottagui-Tabar S."/>
            <person name="Mulder N."/>
            <person name="Nakano N."/>
            <person name="Nakauchi H."/>
            <person name="Ng P."/>
            <person name="Nilsson R."/>
            <person name="Nishiguchi S."/>
            <person name="Nishikawa S."/>
            <person name="Nori F."/>
            <person name="Ohara O."/>
            <person name="Okazaki Y."/>
            <person name="Orlando V."/>
            <person name="Pang K.C."/>
            <person name="Pavan W.J."/>
            <person name="Pavesi G."/>
            <person name="Pesole G."/>
            <person name="Petrovsky N."/>
            <person name="Piazza S."/>
            <person name="Reed J."/>
            <person name="Reid J.F."/>
            <person name="Ring B.Z."/>
            <person name="Ringwald M."/>
            <person name="Rost B."/>
            <person name="Ruan Y."/>
            <person name="Salzberg S.L."/>
            <person name="Sandelin A."/>
            <person name="Schneider C."/>
            <person name="Schoenbach C."/>
            <person name="Sekiguchi K."/>
            <person name="Semple C.A."/>
            <person name="Seno S."/>
            <person name="Sessa L."/>
            <person name="Sheng Y."/>
            <person name="Shibata Y."/>
            <person name="Shimada H."/>
            <person name="Shimada K."/>
            <person name="Silva D."/>
            <person name="Sinclair B."/>
            <person name="Sperling S."/>
            <person name="Stupka E."/>
            <person name="Sugiura K."/>
            <person name="Sultana R."/>
            <person name="Takenaka Y."/>
            <person name="Taki K."/>
            <person name="Tammoja K."/>
            <person name="Tan S.L."/>
            <person name="Tang S."/>
            <person name="Taylor M.S."/>
            <person name="Tegner J."/>
            <person name="Teichmann S.A."/>
            <person name="Ueda H.R."/>
            <person name="van Nimwegen E."/>
            <person name="Verardo R."/>
            <person name="Wei C.L."/>
            <person name="Yagi K."/>
            <person name="Yamanishi H."/>
            <person name="Zabarovsky E."/>
            <person name="Zhu S."/>
            <person name="Zimmer A."/>
            <person name="Hide W."/>
            <person name="Bult C."/>
            <person name="Grimmond S.M."/>
            <person name="Teasdale R.D."/>
            <person name="Liu E.T."/>
            <person name="Brusic V."/>
            <person name="Quackenbush J."/>
            <person name="Wahlestedt C."/>
            <person name="Mattick J.S."/>
            <person name="Hume D.A."/>
            <person name="Kai C."/>
            <person name="Sasaki D."/>
            <person name="Tomaru Y."/>
            <person name="Fukuda S."/>
            <person name="Kanamori-Katayama M."/>
            <person name="Suzuki M."/>
            <person name="Aoki J."/>
            <person name="Arakawa T."/>
            <person name="Iida J."/>
            <person name="Imamura K."/>
            <person name="Itoh M."/>
            <person name="Kato T."/>
            <person name="Kawaji H."/>
            <person name="Kawagashira N."/>
            <person name="Kawashima T."/>
            <person name="Kojima M."/>
            <person name="Kondo S."/>
            <person name="Konno H."/>
            <person name="Nakano K."/>
            <person name="Ninomiya N."/>
            <person name="Nishio T."/>
            <person name="Okada M."/>
            <person name="Plessy C."/>
            <person name="Shibata K."/>
            <person name="Shiraki T."/>
            <person name="Suzuki S."/>
            <person name="Tagami M."/>
            <person name="Waki K."/>
            <person name="Watahiki A."/>
            <person name="Okamura-Oho Y."/>
            <person name="Suzuki H."/>
            <person name="Kawai J."/>
            <person name="Hayashizaki Y."/>
        </authorList>
    </citation>
    <scope>NUCLEOTIDE SEQUENCE [LARGE SCALE MRNA]</scope>
    <source>
        <strain>C57BL/6J</strain>
        <tissue>Embryonic stem cell</tissue>
        <tissue>Kidney</tissue>
    </source>
</reference>
<reference key="3">
    <citation type="journal article" date="2004" name="Genome Res.">
        <title>The status, quality, and expansion of the NIH full-length cDNA project: the Mammalian Gene Collection (MGC).</title>
        <authorList>
            <consortium name="The MGC Project Team"/>
        </authorList>
    </citation>
    <scope>NUCLEOTIDE SEQUENCE [LARGE SCALE MRNA]</scope>
    <source>
        <strain>C57BL/6J</strain>
        <tissue>Brain</tissue>
    </source>
</reference>
<reference key="4">
    <citation type="journal article" date="2010" name="Cell">
        <title>A tissue-specific atlas of mouse protein phosphorylation and expression.</title>
        <authorList>
            <person name="Huttlin E.L."/>
            <person name="Jedrychowski M.P."/>
            <person name="Elias J.E."/>
            <person name="Goswami T."/>
            <person name="Rad R."/>
            <person name="Beausoleil S.A."/>
            <person name="Villen J."/>
            <person name="Haas W."/>
            <person name="Sowa M.E."/>
            <person name="Gygi S.P."/>
        </authorList>
    </citation>
    <scope>IDENTIFICATION BY MASS SPECTROMETRY [LARGE SCALE ANALYSIS]</scope>
    <source>
        <tissue>Brain</tissue>
        <tissue>Brown adipose tissue</tissue>
        <tissue>Heart</tissue>
        <tissue>Kidney</tissue>
        <tissue>Liver</tissue>
        <tissue>Spleen</tissue>
        <tissue>Testis</tissue>
    </source>
</reference>
<accession>Q9CQF0</accession>
<accession>Q3TJX7</accession>
<feature type="transit peptide" description="Mitochondrion" evidence="2">
    <location>
        <begin position="1"/>
        <end status="unknown"/>
    </location>
</feature>
<feature type="chain" id="PRO_0000030444" description="Large ribosomal subunit protein uL11m">
    <location>
        <begin status="unknown"/>
        <end position="192"/>
    </location>
</feature>
<organism>
    <name type="scientific">Mus musculus</name>
    <name type="common">Mouse</name>
    <dbReference type="NCBI Taxonomy" id="10090"/>
    <lineage>
        <taxon>Eukaryota</taxon>
        <taxon>Metazoa</taxon>
        <taxon>Chordata</taxon>
        <taxon>Craniata</taxon>
        <taxon>Vertebrata</taxon>
        <taxon>Euteleostomi</taxon>
        <taxon>Mammalia</taxon>
        <taxon>Eutheria</taxon>
        <taxon>Euarchontoglires</taxon>
        <taxon>Glires</taxon>
        <taxon>Rodentia</taxon>
        <taxon>Myomorpha</taxon>
        <taxon>Muroidea</taxon>
        <taxon>Muridae</taxon>
        <taxon>Murinae</taxon>
        <taxon>Mus</taxon>
        <taxon>Mus</taxon>
    </lineage>
</organism>